<sequence length="591" mass="64464">MFGIQESIQRSGSSMKEEPLGSGMNAVRTWMQGAGVLDANTAAQSGVGLARAHFEKQPPSNLRKSNFFHFVLALYDRQGQPVEIERTAFVGFVEKEKEANSEKTNNGIHYRLQLLYSNGIRTEQDFYVRLIDSMTKQAIVYEGQDKNPEMCRVLLTHEIMCSRCCDKKSCGNRNETPSDPVIIDRFFLKFFLKCNQNCLKNAGNPRDMRRFQVVVSTTVNVDGHVLAVSDNMFVHNNSKHGRRARRLDPSEGTPSYLEHATPCIKAISPSEGWTTGGATVIIIGDNFFDGLQVIFGTMLVWSELITPHAIRVQTPPRHIPGVVEVTLSYKSKQFCKGTPGRFIYTALNEPTIDYGFQRLQKVIPRHPGDPERLPKEVILKRAADLVEALYGMPHNNQEIILKRAADIAEALYSVPRNHNQLPALANTSVHAGMMGVNSFSGQLAVNVSEASQATNQGFTRNSSSVSPHGYVPSTTPQQTNYNSVTTSMNGYGSAAMSNLGGSPTFLNGSAANSPYAIVPSSPTMASSTSLPSNCSSSSGIFSFSPANMVSAVKQKSAFAPVVRPQTSPPPTCTSTNGNSLQAISGMIVPPM</sequence>
<gene>
    <name type="primary">EBF1</name>
    <name type="synonym">COE1</name>
    <name type="synonym">EBF</name>
</gene>
<organism>
    <name type="scientific">Homo sapiens</name>
    <name type="common">Human</name>
    <dbReference type="NCBI Taxonomy" id="9606"/>
    <lineage>
        <taxon>Eukaryota</taxon>
        <taxon>Metazoa</taxon>
        <taxon>Chordata</taxon>
        <taxon>Craniata</taxon>
        <taxon>Vertebrata</taxon>
        <taxon>Euteleostomi</taxon>
        <taxon>Mammalia</taxon>
        <taxon>Eutheria</taxon>
        <taxon>Euarchontoglires</taxon>
        <taxon>Primates</taxon>
        <taxon>Haplorrhini</taxon>
        <taxon>Catarrhini</taxon>
        <taxon>Hominidae</taxon>
        <taxon>Homo</taxon>
    </lineage>
</organism>
<dbReference type="EMBL" id="BC038805">
    <property type="protein sequence ID" value="AAH38805.1"/>
    <property type="molecule type" value="mRNA"/>
</dbReference>
<dbReference type="EMBL" id="BC041178">
    <property type="protein sequence ID" value="AAH41178.1"/>
    <property type="molecule type" value="mRNA"/>
</dbReference>
<dbReference type="EMBL" id="AF208502">
    <property type="protein sequence ID" value="AAF19643.1"/>
    <property type="molecule type" value="mRNA"/>
</dbReference>
<dbReference type="CCDS" id="CCDS4343.1">
    <molecule id="Q9UH73-1"/>
</dbReference>
<dbReference type="CCDS" id="CCDS78081.1">
    <molecule id="Q9UH73-2"/>
</dbReference>
<dbReference type="RefSeq" id="NP_076870.1">
    <molecule id="Q9UH73-1"/>
    <property type="nucleotide sequence ID" value="NM_024007.5"/>
</dbReference>
<dbReference type="RefSeq" id="NP_874367.1">
    <molecule id="Q9UH73-2"/>
    <property type="nucleotide sequence ID" value="NM_182708.3"/>
</dbReference>
<dbReference type="PDB" id="3LYR">
    <property type="method" value="X-ray"/>
    <property type="resolution" value="2.51 A"/>
    <property type="chains" value="A=10-250"/>
</dbReference>
<dbReference type="PDB" id="3MQI">
    <property type="method" value="X-ray"/>
    <property type="resolution" value="2.30 A"/>
    <property type="chains" value="A/B/C=258-351"/>
</dbReference>
<dbReference type="PDBsum" id="3LYR"/>
<dbReference type="PDBsum" id="3MQI"/>
<dbReference type="SMR" id="Q9UH73"/>
<dbReference type="BioGRID" id="108211">
    <property type="interactions" value="13"/>
</dbReference>
<dbReference type="FunCoup" id="Q9UH73">
    <property type="interactions" value="2224"/>
</dbReference>
<dbReference type="IntAct" id="Q9UH73">
    <property type="interactions" value="9"/>
</dbReference>
<dbReference type="MINT" id="Q9UH73"/>
<dbReference type="STRING" id="9606.ENSP00000322898"/>
<dbReference type="GlyGen" id="Q9UH73">
    <property type="glycosylation" value="1 site"/>
</dbReference>
<dbReference type="iPTMnet" id="Q9UH73"/>
<dbReference type="PhosphoSitePlus" id="Q9UH73"/>
<dbReference type="SwissPalm" id="Q9UH73"/>
<dbReference type="BioMuta" id="EBF1"/>
<dbReference type="DMDM" id="47117917"/>
<dbReference type="jPOST" id="Q9UH73"/>
<dbReference type="MassIVE" id="Q9UH73"/>
<dbReference type="PaxDb" id="9606-ENSP00000322898"/>
<dbReference type="PeptideAtlas" id="Q9UH73"/>
<dbReference type="ProteomicsDB" id="84280">
    <molecule id="Q9UH73-1"/>
</dbReference>
<dbReference type="ProteomicsDB" id="84281">
    <molecule id="Q9UH73-2"/>
</dbReference>
<dbReference type="Antibodypedia" id="28482">
    <property type="antibodies" value="181 antibodies from 29 providers"/>
</dbReference>
<dbReference type="DNASU" id="1879"/>
<dbReference type="Ensembl" id="ENST00000313708.11">
    <molecule id="Q9UH73-1"/>
    <property type="protein sequence ID" value="ENSP00000322898.6"/>
    <property type="gene ID" value="ENSG00000164330.18"/>
</dbReference>
<dbReference type="Ensembl" id="ENST00000380654.8">
    <molecule id="Q9UH73-2"/>
    <property type="protein sequence ID" value="ENSP00000370029.4"/>
    <property type="gene ID" value="ENSG00000164330.18"/>
</dbReference>
<dbReference type="GeneID" id="1879"/>
<dbReference type="KEGG" id="hsa:1879"/>
<dbReference type="MANE-Select" id="ENST00000313708.11">
    <property type="protein sequence ID" value="ENSP00000322898.6"/>
    <property type="RefSeq nucleotide sequence ID" value="NM_024007.5"/>
    <property type="RefSeq protein sequence ID" value="NP_076870.1"/>
</dbReference>
<dbReference type="UCSC" id="uc003lxl.7">
    <molecule id="Q9UH73-1"/>
    <property type="organism name" value="human"/>
</dbReference>
<dbReference type="AGR" id="HGNC:3126"/>
<dbReference type="CTD" id="1879"/>
<dbReference type="DisGeNET" id="1879"/>
<dbReference type="GeneCards" id="EBF1"/>
<dbReference type="HGNC" id="HGNC:3126">
    <property type="gene designation" value="EBF1"/>
</dbReference>
<dbReference type="HPA" id="ENSG00000164330">
    <property type="expression patterns" value="Tissue enhanced (adipose)"/>
</dbReference>
<dbReference type="MalaCards" id="EBF1"/>
<dbReference type="MIM" id="164343">
    <property type="type" value="gene"/>
</dbReference>
<dbReference type="neXtProt" id="NX_Q9UH73"/>
<dbReference type="OpenTargets" id="ENSG00000164330"/>
<dbReference type="PharmGKB" id="PA162384225"/>
<dbReference type="VEuPathDB" id="HostDB:ENSG00000164330"/>
<dbReference type="eggNOG" id="KOG3836">
    <property type="taxonomic scope" value="Eukaryota"/>
</dbReference>
<dbReference type="GeneTree" id="ENSGT00950000182859"/>
<dbReference type="InParanoid" id="Q9UH73"/>
<dbReference type="OMA" id="FGSTTVW"/>
<dbReference type="OrthoDB" id="25246at2759"/>
<dbReference type="PAN-GO" id="Q9UH73">
    <property type="GO annotations" value="3 GO annotations based on evolutionary models"/>
</dbReference>
<dbReference type="PhylomeDB" id="Q9UH73"/>
<dbReference type="TreeFam" id="TF313391"/>
<dbReference type="PathwayCommons" id="Q9UH73"/>
<dbReference type="Reactome" id="R-HSA-381340">
    <property type="pathway name" value="Transcriptional regulation of white adipocyte differentiation"/>
</dbReference>
<dbReference type="Reactome" id="R-HSA-9752946">
    <property type="pathway name" value="Expression and translocation of olfactory receptors"/>
</dbReference>
<dbReference type="SignaLink" id="Q9UH73"/>
<dbReference type="SIGNOR" id="Q9UH73"/>
<dbReference type="BioGRID-ORCS" id="1879">
    <property type="hits" value="22 hits in 1163 CRISPR screens"/>
</dbReference>
<dbReference type="ChiTaRS" id="EBF1">
    <property type="organism name" value="human"/>
</dbReference>
<dbReference type="EvolutionaryTrace" id="Q9UH73"/>
<dbReference type="GeneWiki" id="EBF1"/>
<dbReference type="GenomeRNAi" id="1879"/>
<dbReference type="Pharos" id="Q9UH73">
    <property type="development level" value="Tbio"/>
</dbReference>
<dbReference type="PRO" id="PR:Q9UH73"/>
<dbReference type="Proteomes" id="UP000005640">
    <property type="component" value="Chromosome 5"/>
</dbReference>
<dbReference type="RNAct" id="Q9UH73">
    <property type="molecule type" value="protein"/>
</dbReference>
<dbReference type="Bgee" id="ENSG00000164330">
    <property type="expression patterns" value="Expressed in synovial joint and 189 other cell types or tissues"/>
</dbReference>
<dbReference type="ExpressionAtlas" id="Q9UH73">
    <property type="expression patterns" value="baseline and differential"/>
</dbReference>
<dbReference type="GO" id="GO:0000785">
    <property type="term" value="C:chromatin"/>
    <property type="evidence" value="ECO:0000247"/>
    <property type="project" value="NTNU_SB"/>
</dbReference>
<dbReference type="GO" id="GO:0005634">
    <property type="term" value="C:nucleus"/>
    <property type="evidence" value="ECO:0007669"/>
    <property type="project" value="UniProtKB-SubCell"/>
</dbReference>
<dbReference type="GO" id="GO:0000981">
    <property type="term" value="F:DNA-binding transcription factor activity, RNA polymerase II-specific"/>
    <property type="evidence" value="ECO:0000247"/>
    <property type="project" value="NTNU_SB"/>
</dbReference>
<dbReference type="GO" id="GO:0000978">
    <property type="term" value="F:RNA polymerase II cis-regulatory region sequence-specific DNA binding"/>
    <property type="evidence" value="ECO:0000318"/>
    <property type="project" value="GO_Central"/>
</dbReference>
<dbReference type="GO" id="GO:0008270">
    <property type="term" value="F:zinc ion binding"/>
    <property type="evidence" value="ECO:0007669"/>
    <property type="project" value="UniProtKB-KW"/>
</dbReference>
<dbReference type="GO" id="GO:0006357">
    <property type="term" value="P:regulation of transcription by RNA polymerase II"/>
    <property type="evidence" value="ECO:0000318"/>
    <property type="project" value="GO_Central"/>
</dbReference>
<dbReference type="CDD" id="cd11606">
    <property type="entry name" value="COE_DBD"/>
    <property type="match status" value="1"/>
</dbReference>
<dbReference type="CDD" id="cd01175">
    <property type="entry name" value="IPT_COE"/>
    <property type="match status" value="1"/>
</dbReference>
<dbReference type="FunFam" id="2.60.40.3180:FF:000004">
    <property type="entry name" value="Transcription factor COE1"/>
    <property type="match status" value="1"/>
</dbReference>
<dbReference type="FunFam" id="1.10.287.4280:FF:000001">
    <property type="entry name" value="transcription factor COE1 isoform X2"/>
    <property type="match status" value="1"/>
</dbReference>
<dbReference type="FunFam" id="2.60.40.10:FF:001696">
    <property type="entry name" value="Transcription factor COE3"/>
    <property type="match status" value="1"/>
</dbReference>
<dbReference type="Gene3D" id="1.10.287.4280">
    <property type="match status" value="1"/>
</dbReference>
<dbReference type="Gene3D" id="2.60.40.10">
    <property type="entry name" value="Immunoglobulins"/>
    <property type="match status" value="1"/>
</dbReference>
<dbReference type="Gene3D" id="2.60.40.3180">
    <property type="entry name" value="Transcription factor COE1, DNA-binding domain"/>
    <property type="match status" value="1"/>
</dbReference>
<dbReference type="InterPro" id="IPR032200">
    <property type="entry name" value="COE_DBD"/>
</dbReference>
<dbReference type="InterPro" id="IPR038173">
    <property type="entry name" value="COE_DBD_sf"/>
</dbReference>
<dbReference type="InterPro" id="IPR032201">
    <property type="entry name" value="COE_HLH"/>
</dbReference>
<dbReference type="InterPro" id="IPR038006">
    <property type="entry name" value="COE_IPT"/>
</dbReference>
<dbReference type="InterPro" id="IPR013783">
    <property type="entry name" value="Ig-like_fold"/>
</dbReference>
<dbReference type="InterPro" id="IPR014756">
    <property type="entry name" value="Ig_E-set"/>
</dbReference>
<dbReference type="InterPro" id="IPR002909">
    <property type="entry name" value="IPT_dom"/>
</dbReference>
<dbReference type="InterPro" id="IPR003523">
    <property type="entry name" value="Transcription_factor_COE"/>
</dbReference>
<dbReference type="InterPro" id="IPR018350">
    <property type="entry name" value="Transcription_factor_COE_CS"/>
</dbReference>
<dbReference type="PANTHER" id="PTHR10747">
    <property type="entry name" value="TRANSCRIPTION FACTOR COE FAMILY MEMBER"/>
    <property type="match status" value="1"/>
</dbReference>
<dbReference type="Pfam" id="PF16422">
    <property type="entry name" value="COE1_DBD"/>
    <property type="match status" value="1"/>
</dbReference>
<dbReference type="Pfam" id="PF16423">
    <property type="entry name" value="COE1_HLH"/>
    <property type="match status" value="1"/>
</dbReference>
<dbReference type="Pfam" id="PF01833">
    <property type="entry name" value="TIG"/>
    <property type="match status" value="1"/>
</dbReference>
<dbReference type="SMART" id="SM00429">
    <property type="entry name" value="IPT"/>
    <property type="match status" value="1"/>
</dbReference>
<dbReference type="SUPFAM" id="SSF81296">
    <property type="entry name" value="E set domains"/>
    <property type="match status" value="1"/>
</dbReference>
<dbReference type="PROSITE" id="PS01345">
    <property type="entry name" value="COE"/>
    <property type="match status" value="1"/>
</dbReference>
<reference key="1">
    <citation type="journal article" date="2004" name="Genome Res.">
        <title>The status, quality, and expansion of the NIH full-length cDNA project: the Mammalian Gene Collection (MGC).</title>
        <authorList>
            <consortium name="The MGC Project Team"/>
        </authorList>
    </citation>
    <scope>NUCLEOTIDE SEQUENCE [LARGE SCALE MRNA] (ISOFORMS 1 AND 2)</scope>
    <source>
        <tissue>Testis</tissue>
    </source>
</reference>
<reference key="2">
    <citation type="journal article" date="2000" name="Blood">
        <title>Cloning of human early B-cell factor and identification of target genes suggest a conserved role in B-cell development in man and mouse.</title>
        <authorList>
            <person name="Gisler R."/>
            <person name="Jacobsen S.E."/>
            <person name="Sigvardsson M."/>
        </authorList>
    </citation>
    <scope>NUCLEOTIDE SEQUENCE [MRNA] OF 6-591 (ISOFORM 1)</scope>
</reference>
<reference key="3">
    <citation type="journal article" date="2004" name="Blood">
        <title>Early hematopoietic zinc finger protein (EHZF), the human homolog to mouse Evi3, is highly expressed in primitive human hematopoietic cells.</title>
        <authorList>
            <person name="Bond H.M."/>
            <person name="Mesuraca M."/>
            <person name="Carbone E."/>
            <person name="Bonelli P."/>
            <person name="Agosti V."/>
            <person name="Amodio N."/>
            <person name="De Rosa G."/>
            <person name="Di Nicola M."/>
            <person name="Gianni A.M."/>
            <person name="Moore M.A."/>
            <person name="Hata A."/>
            <person name="Grieco M."/>
            <person name="Morrone G."/>
            <person name="Venuta S."/>
        </authorList>
    </citation>
    <scope>INTERACTION WITH ZNF521</scope>
</reference>
<reference key="4">
    <citation type="journal article" date="2012" name="Proc. Natl. Acad. Sci. U.S.A.">
        <title>N-terminal acetylome analyses and functional insights of the N-terminal acetyltransferase NatB.</title>
        <authorList>
            <person name="Van Damme P."/>
            <person name="Lasa M."/>
            <person name="Polevoda B."/>
            <person name="Gazquez C."/>
            <person name="Elosegui-Artola A."/>
            <person name="Kim D.S."/>
            <person name="De Juan-Pardo E."/>
            <person name="Demeyer K."/>
            <person name="Hole K."/>
            <person name="Larrea E."/>
            <person name="Timmerman E."/>
            <person name="Prieto J."/>
            <person name="Arnesen T."/>
            <person name="Sherman F."/>
            <person name="Gevaert K."/>
            <person name="Aldabe R."/>
        </authorList>
    </citation>
    <scope>ACETYLATION [LARGE SCALE ANALYSIS] AT MET-1</scope>
    <scope>IDENTIFICATION BY MASS SPECTROMETRY [LARGE SCALE ANALYSIS]</scope>
</reference>
<reference key="5">
    <citation type="journal article" date="2014" name="Proc. Natl. Acad. Sci. U.S.A.">
        <title>Mapping of SUMO sites and analysis of SUMOylation changes induced by external stimuli.</title>
        <authorList>
            <person name="Impens F."/>
            <person name="Radoshevich L."/>
            <person name="Cossart P."/>
            <person name="Ribet D."/>
        </authorList>
    </citation>
    <scope>SUMOYLATION [LARGE SCALE ANALYSIS] AT LYS-16</scope>
    <scope>IDENTIFICATION BY MASS SPECTROMETRY [LARGE SCALE ANALYSIS]</scope>
</reference>
<reference key="6">
    <citation type="journal article" date="2017" name="Nat. Struct. Mol. Biol.">
        <title>Site-specific mapping of the human SUMO proteome reveals co-modification with phosphorylation.</title>
        <authorList>
            <person name="Hendriks I.A."/>
            <person name="Lyon D."/>
            <person name="Young C."/>
            <person name="Jensen L.J."/>
            <person name="Vertegaal A.C."/>
            <person name="Nielsen M.L."/>
        </authorList>
    </citation>
    <scope>SUMOYLATION [LARGE SCALE ANALYSIS] AT LYS-16</scope>
    <scope>IDENTIFICATION BY MASS SPECTROMETRY [LARGE SCALE ANALYSIS]</scope>
</reference>
<reference key="7">
    <citation type="journal article" date="2016" name="J. Virol.">
        <title>Induction of Epstein-Barr Virus Oncoprotein LMP1 by Transcription Factors AP-2 and Early B Cell Factor.</title>
        <authorList>
            <person name="Murata T."/>
            <person name="Noda C."/>
            <person name="Narita Y."/>
            <person name="Watanabe T."/>
            <person name="Yoshida M."/>
            <person name="Ashio K."/>
            <person name="Sato Y."/>
            <person name="Goshima F."/>
            <person name="Kanda T."/>
            <person name="Yoshiyama H."/>
            <person name="Tsurumi T."/>
            <person name="Kimura H."/>
        </authorList>
    </citation>
    <scope>FUNCTION (MICROBIAL INFECTION)</scope>
</reference>
<reference key="8">
    <citation type="journal article" date="2016" name="Genes Dev.">
        <title>Interaction of CCR4-NOT with EBF1 regulates gene-specific transcription and mRNA stability in B lymphopoiesis.</title>
        <authorList>
            <person name="Yang C.Y."/>
            <person name="Ramamoorthy S."/>
            <person name="Boller S."/>
            <person name="Rosenbaum M."/>
            <person name="Rodriguez Gil A."/>
            <person name="Mittler G."/>
            <person name="Imai Y."/>
            <person name="Kuba K."/>
            <person name="Grosschedl R."/>
        </authorList>
    </citation>
    <scope>FUNCTION</scope>
    <scope>INTERACTION WITH CNOT3</scope>
    <scope>MUTAGENESIS OF HIS-240</scope>
</reference>
<reference key="9">
    <citation type="journal article" date="2017" name="PLoS Pathog.">
        <title>EBF1 binds to EBNA2 and promotes the assembly of EBNA2 chromatin complexes in B cells.</title>
        <authorList>
            <person name="Glaser L.V."/>
            <person name="Rieger S."/>
            <person name="Thumann S."/>
            <person name="Beer S."/>
            <person name="Kuklik-Roos C."/>
            <person name="Martin D.E."/>
            <person name="Maier K.C."/>
            <person name="Harth-Hertle M.L."/>
            <person name="Gruening B."/>
            <person name="Backofen R."/>
            <person name="Krebs S."/>
            <person name="Blum H."/>
            <person name="Zimmer R."/>
            <person name="Erhard F."/>
            <person name="Kempkes B."/>
        </authorList>
    </citation>
    <scope>FUNCTION (MICROBIAL INFECTION)</scope>
    <scope>INTERACTION WITH EPSTEIN-BARR VIRUS PROTEIN EBNA2 (MICROBIAL INFECTION)</scope>
</reference>
<reference key="10">
    <citation type="journal article" date="2010" name="J. Biol. Chem.">
        <title>Structural determination of functional domains in early B-cell factor (EBF) family of transcription factors reveals similarities to Rel DNA-binding proteins and a novel dimerization motif.</title>
        <authorList>
            <person name="Siponen M.I."/>
            <person name="Wisniewska M."/>
            <person name="Lehtio L."/>
            <person name="Johansson I."/>
            <person name="Svensson L."/>
            <person name="Raszewski G."/>
            <person name="Nilsson L."/>
            <person name="Sigvardsson M."/>
            <person name="Berglund H."/>
        </authorList>
    </citation>
    <scope>X-RAY CRYSTALLOGRAPHY (2.3 ANGSTROMS) OF 10-351 IN COMPLEX WITH ZINC IONS</scope>
    <scope>SUBUNIT</scope>
</reference>
<protein>
    <recommendedName>
        <fullName>Transcription factor COE1</fullName>
        <shortName>O/E-1</shortName>
        <shortName>OE-1</shortName>
    </recommendedName>
    <alternativeName>
        <fullName>Early B-cell factor</fullName>
    </alternativeName>
</protein>
<comment type="function">
    <text evidence="1 6">Key pioneer transcription factor of B-cell specification and commitment (PubMed:27807034). Recognizes variations of the palindromic sequence 5'-ATTCCCNNGGGAATT-3'. Operates in a transcription factor network to activate B-cell-specific genes and repress genes associated with alternative cell fates. For instance, positively regulates many B-cell specific genes including BCR or CD40 while repressing genes that direct cells into alternative lineages, including GATA3 and TCF7 for the T-cell lineage. In addition to its role during lymphopoiesis, controls the thermogenic gene program in adipocytes during development and in response to environmental cold (By similarity).</text>
</comment>
<comment type="function">
    <text evidence="5 7">(Microbial infection) Acts as a chromatin anchor for Epstein-Barr virus EBNA2 to mediate the assembly of EBNA2 chromatin complexes in B-cells (PubMed:28968461). In addition, binds to the viral LMP1 proximal promoter and promotes its expression during latency (PubMed:26819314).</text>
</comment>
<comment type="subunit">
    <text evidence="3 4">Homodimer (PubMed:20592035). Interacts with ZNF423 and ZNF521, leading to prevent EBF1 to bind DNA and activate target genes (PubMed:14630787). Interacts with CCR4-NOT component CNOT3 (PubMed:14630787).</text>
</comment>
<comment type="subunit">
    <text evidence="7">(Microbial infection) Interacts with Epstein-barr virus protein EBNA2.</text>
</comment>
<comment type="interaction">
    <interactant intactId="EBI-765426">
        <id>Q9UH73</id>
    </interactant>
    <interactant intactId="EBI-1166928">
        <id>Q8N5M1</id>
        <label>ATPAF2</label>
    </interactant>
    <organismsDiffer>false</organismsDiffer>
    <experiments>10</experiments>
</comment>
<comment type="interaction">
    <interactant intactId="EBI-765426">
        <id>Q9UH73</id>
    </interactant>
    <interactant intactId="EBI-10172004">
        <id>Q8IX15-3</id>
        <label>HOMEZ</label>
    </interactant>
    <organismsDiffer>false</organismsDiffer>
    <experiments>3</experiments>
</comment>
<comment type="interaction">
    <interactant intactId="EBI-765426">
        <id>Q9UH73</id>
    </interactant>
    <interactant intactId="EBI-12029004">
        <id>P78424</id>
        <label>POU6F2</label>
    </interactant>
    <organismsDiffer>false</organismsDiffer>
    <experiments>3</experiments>
</comment>
<comment type="interaction">
    <interactant intactId="EBI-765426">
        <id>Q9UH73</id>
    </interactant>
    <interactant intactId="EBI-5235340">
        <id>Q7Z699</id>
        <label>SPRED1</label>
    </interactant>
    <organismsDiffer>false</organismsDiffer>
    <experiments>3</experiments>
</comment>
<comment type="subcellular location">
    <subcellularLocation>
        <location evidence="9">Nucleus</location>
    </subcellularLocation>
</comment>
<comment type="alternative products">
    <event type="alternative splicing"/>
    <isoform>
        <id>Q9UH73-1</id>
        <name>1</name>
        <sequence type="displayed"/>
    </isoform>
    <isoform>
        <id>Q9UH73-2</id>
        <name>2</name>
        <sequence type="described" ref="VSP_012304 VSP_012305"/>
    </isoform>
</comment>
<comment type="similarity">
    <text evidence="9">Belongs to the COE family.</text>
</comment>
<proteinExistence type="evidence at protein level"/>
<name>COE1_HUMAN</name>
<keyword id="KW-0002">3D-structure</keyword>
<keyword id="KW-0007">Acetylation</keyword>
<keyword id="KW-0010">Activator</keyword>
<keyword id="KW-0025">Alternative splicing</keyword>
<keyword id="KW-0217">Developmental protein</keyword>
<keyword id="KW-0238">DNA-binding</keyword>
<keyword id="KW-1017">Isopeptide bond</keyword>
<keyword id="KW-0479">Metal-binding</keyword>
<keyword id="KW-0539">Nucleus</keyword>
<keyword id="KW-1267">Proteomics identification</keyword>
<keyword id="KW-1185">Reference proteome</keyword>
<keyword id="KW-0804">Transcription</keyword>
<keyword id="KW-0805">Transcription regulation</keyword>
<keyword id="KW-0832">Ubl conjugation</keyword>
<keyword id="KW-0862">Zinc</keyword>
<keyword id="KW-0863">Zinc-finger</keyword>
<accession>Q9UH73</accession>
<accession>Q8IW11</accession>
<evidence type="ECO:0000250" key="1">
    <source>
        <dbReference type="UniProtKB" id="Q07802"/>
    </source>
</evidence>
<evidence type="ECO:0000256" key="2">
    <source>
        <dbReference type="SAM" id="MobiDB-lite"/>
    </source>
</evidence>
<evidence type="ECO:0000269" key="3">
    <source>
    </source>
</evidence>
<evidence type="ECO:0000269" key="4">
    <source>
    </source>
</evidence>
<evidence type="ECO:0000269" key="5">
    <source>
    </source>
</evidence>
<evidence type="ECO:0000269" key="6">
    <source>
    </source>
</evidence>
<evidence type="ECO:0000269" key="7">
    <source>
    </source>
</evidence>
<evidence type="ECO:0000303" key="8">
    <source>
    </source>
</evidence>
<evidence type="ECO:0000305" key="9"/>
<evidence type="ECO:0007744" key="10">
    <source>
    </source>
</evidence>
<evidence type="ECO:0007744" key="11">
    <source>
    </source>
</evidence>
<evidence type="ECO:0007744" key="12">
    <source>
    </source>
</evidence>
<evidence type="ECO:0007829" key="13">
    <source>
        <dbReference type="PDB" id="3LYR"/>
    </source>
</evidence>
<evidence type="ECO:0007829" key="14">
    <source>
        <dbReference type="PDB" id="3MQI"/>
    </source>
</evidence>
<feature type="chain" id="PRO_0000107825" description="Transcription factor COE1">
    <location>
        <begin position="1"/>
        <end position="591"/>
    </location>
</feature>
<feature type="domain" description="IPT/TIG">
    <location>
        <begin position="262"/>
        <end position="345"/>
    </location>
</feature>
<feature type="zinc finger region" description="C5-type" evidence="1">
    <location>
        <begin position="151"/>
        <end position="170"/>
    </location>
</feature>
<feature type="region of interest" description="Disordered" evidence="2">
    <location>
        <begin position="1"/>
        <end position="21"/>
    </location>
</feature>
<feature type="region of interest" description="Interaction with DNA" evidence="1">
    <location>
        <begin position="63"/>
        <end position="66"/>
    </location>
</feature>
<feature type="region of interest" description="Interaction with DNA" evidence="1">
    <location>
        <begin position="197"/>
        <end position="204"/>
    </location>
</feature>
<feature type="region of interest" description="Interaction with DNA" evidence="1">
    <location>
        <begin position="236"/>
        <end position="239"/>
    </location>
</feature>
<feature type="region of interest" description="Disordered" evidence="2">
    <location>
        <begin position="457"/>
        <end position="480"/>
    </location>
</feature>
<feature type="compositionally biased region" description="Polar residues" evidence="2">
    <location>
        <begin position="1"/>
        <end position="14"/>
    </location>
</feature>
<feature type="site" description="Interaction with DNA" evidence="1">
    <location>
        <position position="163"/>
    </location>
</feature>
<feature type="site" description="Interaction with DNA" evidence="1">
    <location>
        <position position="172"/>
    </location>
</feature>
<feature type="modified residue" description="N-acetylmethionine" evidence="10">
    <location>
        <position position="1"/>
    </location>
</feature>
<feature type="cross-link" description="Glycyl lysine isopeptide (Lys-Gly) (interchain with G-Cter in SUMO1); alternate" evidence="11">
    <location>
        <position position="16"/>
    </location>
</feature>
<feature type="cross-link" description="Glycyl lysine isopeptide (Lys-Gly) (interchain with G-Cter in SUMO2); alternate" evidence="11 12">
    <location>
        <position position="16"/>
    </location>
</feature>
<feature type="splice variant" id="VSP_012304" description="In isoform 2." evidence="8">
    <location>
        <begin position="162"/>
        <end position="184"/>
    </location>
</feature>
<feature type="splice variant" id="VSP_012305" description="In isoform 2." evidence="8">
    <location>
        <begin position="252"/>
        <end position="259"/>
    </location>
</feature>
<feature type="mutagenesis site" description="Impaired EBF1-mediated cell differentiation and gene expression mostly without changing EBF1 occupancy." evidence="6">
    <original>H</original>
    <variation>A</variation>
    <location>
        <position position="240"/>
    </location>
</feature>
<feature type="sequence conflict" description="In Ref. 2; AAF19643." evidence="9" ref="2">
    <original>L</original>
    <variation>I</variation>
    <location>
        <position position="112"/>
    </location>
</feature>
<feature type="sequence conflict" description="In Ref. 2; AAF19643." evidence="9" ref="2">
    <original>N</original>
    <variation>S</variation>
    <location>
        <position position="147"/>
    </location>
</feature>
<feature type="sequence conflict" description="In Ref. 2; AAF19643." evidence="9" ref="2">
    <original>VS</original>
    <variation>AP</variation>
    <location>
        <begin position="228"/>
        <end position="229"/>
    </location>
</feature>
<feature type="sequence conflict" description="In Ref. 2; AAF19643." evidence="9" ref="2">
    <original>IT</original>
    <variation>TG</variation>
    <location>
        <begin position="305"/>
        <end position="306"/>
    </location>
</feature>
<feature type="sequence conflict" description="In Ref. 2; AAF19643." evidence="9" ref="2">
    <original>A</original>
    <variation>S</variation>
    <location>
        <position position="309"/>
    </location>
</feature>
<feature type="sequence conflict" description="In Ref. 2; AAF19643." evidence="9" ref="2">
    <original>L</original>
    <variation>R</variation>
    <location>
        <position position="347"/>
    </location>
</feature>
<feature type="helix" evidence="13">
    <location>
        <begin position="25"/>
        <end position="31"/>
    </location>
</feature>
<feature type="strand" evidence="13">
    <location>
        <begin position="36"/>
        <end position="38"/>
    </location>
</feature>
<feature type="helix" evidence="13">
    <location>
        <begin position="39"/>
        <end position="43"/>
    </location>
</feature>
<feature type="turn" evidence="13">
    <location>
        <begin position="44"/>
        <end position="46"/>
    </location>
</feature>
<feature type="strand" evidence="13">
    <location>
        <begin position="49"/>
        <end position="56"/>
    </location>
</feature>
<feature type="strand" evidence="13">
    <location>
        <begin position="60"/>
        <end position="63"/>
    </location>
</feature>
<feature type="strand" evidence="13">
    <location>
        <begin position="66"/>
        <end position="76"/>
    </location>
</feature>
<feature type="strand" evidence="13">
    <location>
        <begin position="83"/>
        <end position="93"/>
    </location>
</feature>
<feature type="helix" evidence="13">
    <location>
        <begin position="95"/>
        <end position="97"/>
    </location>
</feature>
<feature type="helix" evidence="13">
    <location>
        <begin position="99"/>
        <end position="101"/>
    </location>
</feature>
<feature type="strand" evidence="13">
    <location>
        <begin position="108"/>
        <end position="115"/>
    </location>
</feature>
<feature type="strand" evidence="13">
    <location>
        <begin position="121"/>
        <end position="132"/>
    </location>
</feature>
<feature type="turn" evidence="13">
    <location>
        <begin position="133"/>
        <end position="135"/>
    </location>
</feature>
<feature type="strand" evidence="13">
    <location>
        <begin position="152"/>
        <end position="155"/>
    </location>
</feature>
<feature type="helix" evidence="13">
    <location>
        <begin position="158"/>
        <end position="160"/>
    </location>
</feature>
<feature type="helix" evidence="13">
    <location>
        <begin position="162"/>
        <end position="165"/>
    </location>
</feature>
<feature type="turn" evidence="13">
    <location>
        <begin position="171"/>
        <end position="175"/>
    </location>
</feature>
<feature type="strand" evidence="13">
    <location>
        <begin position="181"/>
        <end position="183"/>
    </location>
</feature>
<feature type="turn" evidence="13">
    <location>
        <begin position="184"/>
        <end position="186"/>
    </location>
</feature>
<feature type="strand" evidence="13">
    <location>
        <begin position="187"/>
        <end position="194"/>
    </location>
</feature>
<feature type="strand" evidence="13">
    <location>
        <begin position="211"/>
        <end position="219"/>
    </location>
</feature>
<feature type="strand" evidence="13">
    <location>
        <begin position="223"/>
        <end position="228"/>
    </location>
</feature>
<feature type="strand" evidence="13">
    <location>
        <begin position="232"/>
        <end position="235"/>
    </location>
</feature>
<feature type="strand" evidence="14">
    <location>
        <begin position="263"/>
        <end position="268"/>
    </location>
</feature>
<feature type="strand" evidence="14">
    <location>
        <begin position="271"/>
        <end position="273"/>
    </location>
</feature>
<feature type="strand" evidence="14">
    <location>
        <begin position="279"/>
        <end position="286"/>
    </location>
</feature>
<feature type="strand" evidence="14">
    <location>
        <begin position="292"/>
        <end position="295"/>
    </location>
</feature>
<feature type="strand" evidence="14">
    <location>
        <begin position="298"/>
        <end position="300"/>
    </location>
</feature>
<feature type="strand" evidence="14">
    <location>
        <begin position="302"/>
        <end position="306"/>
    </location>
</feature>
<feature type="strand" evidence="14">
    <location>
        <begin position="309"/>
        <end position="313"/>
    </location>
</feature>
<feature type="strand" evidence="14">
    <location>
        <begin position="321"/>
        <end position="329"/>
    </location>
</feature>
<feature type="strand" evidence="14">
    <location>
        <begin position="340"/>
        <end position="345"/>
    </location>
</feature>